<organism evidence="7">
    <name type="scientific">Anopheles gambiae</name>
    <name type="common">African malaria mosquito</name>
    <dbReference type="NCBI Taxonomy" id="7165"/>
    <lineage>
        <taxon>Eukaryota</taxon>
        <taxon>Metazoa</taxon>
        <taxon>Ecdysozoa</taxon>
        <taxon>Arthropoda</taxon>
        <taxon>Hexapoda</taxon>
        <taxon>Insecta</taxon>
        <taxon>Pterygota</taxon>
        <taxon>Neoptera</taxon>
        <taxon>Endopterygota</taxon>
        <taxon>Diptera</taxon>
        <taxon>Nematocera</taxon>
        <taxon>Culicoidea</taxon>
        <taxon>Culicidae</taxon>
        <taxon>Anophelinae</taxon>
        <taxon>Anopheles</taxon>
    </lineage>
</organism>
<comment type="function">
    <text evidence="3">(Microbial infection) Acts as a receptor for ENO/enolase from parasites P.berghei and P.falciparum (PubMed:24474798). The interaction is involved in the invasion of the mosquito midgut by P.berghei ookinete, but is dispensable for P.falciparum ookinete invasion (PubMed:24474798).</text>
</comment>
<comment type="subunit">
    <text evidence="3">(Microbial infection) Interacts with ENO/enolase from parasites P.berghei and P.falciparum.</text>
</comment>
<comment type="subcellular location">
    <subcellularLocation>
        <location evidence="3">Cell membrane</location>
        <topology evidence="5">Single-pass type I membrane protein</topology>
    </subcellularLocation>
    <text evidence="3">Localizes to the luminal side of the midgut epithelium.</text>
</comment>
<comment type="tissue specificity">
    <text evidence="3">Expressed in the female midgut epithelium.</text>
</comment>
<comment type="disruption phenotype">
    <text evidence="3">RNAi-mediated knockdown reduces oocyst formation by 50% following infection with P.berghei but not with P.falciparum.</text>
</comment>
<name>EBPR_ANOGA</name>
<keyword id="KW-1003">Cell membrane</keyword>
<keyword id="KW-0325">Glycoprotein</keyword>
<keyword id="KW-0472">Membrane</keyword>
<keyword id="KW-0675">Receptor</keyword>
<keyword id="KW-1185">Reference proteome</keyword>
<keyword id="KW-0732">Signal</keyword>
<keyword id="KW-0812">Transmembrane</keyword>
<keyword id="KW-1133">Transmembrane helix</keyword>
<proteinExistence type="evidence at protein level"/>
<feature type="signal peptide" evidence="1">
    <location>
        <begin position="1"/>
        <end position="24"/>
    </location>
</feature>
<feature type="chain" id="PRO_5014588429" description="Enolase-binding protein" evidence="1">
    <location>
        <begin position="25"/>
        <end position="407"/>
    </location>
</feature>
<feature type="topological domain" description="Extracellular" evidence="5">
    <location>
        <begin position="25"/>
        <end position="366"/>
    </location>
</feature>
<feature type="transmembrane region" description="Helical" evidence="1">
    <location>
        <begin position="367"/>
        <end position="387"/>
    </location>
</feature>
<feature type="topological domain" description="Cytoplasmic" evidence="5">
    <location>
        <begin position="388"/>
        <end position="407"/>
    </location>
</feature>
<feature type="glycosylation site" description="N-linked (GlcNAc...) asparagine" evidence="2">
    <location>
        <position position="52"/>
    </location>
</feature>
<feature type="glycosylation site" description="N-linked (GlcNAc...) asparagine" evidence="2">
    <location>
        <position position="78"/>
    </location>
</feature>
<feature type="glycosylation site" description="N-linked (GlcNAc...) asparagine" evidence="2">
    <location>
        <position position="161"/>
    </location>
</feature>
<feature type="glycosylation site" description="N-linked (GlcNAc...) asparagine" evidence="2">
    <location>
        <position position="250"/>
    </location>
</feature>
<accession>Q7QDY3</accession>
<gene>
    <name evidence="4" type="primary">EBP</name>
    <name evidence="6" type="ORF">AgaP_AGAP010479</name>
</gene>
<evidence type="ECO:0000255" key="1"/>
<evidence type="ECO:0000255" key="2">
    <source>
        <dbReference type="PROSITE-ProRule" id="PRU00498"/>
    </source>
</evidence>
<evidence type="ECO:0000269" key="3">
    <source>
    </source>
</evidence>
<evidence type="ECO:0000303" key="4">
    <source>
    </source>
</evidence>
<evidence type="ECO:0000305" key="5"/>
<evidence type="ECO:0000312" key="6">
    <source>
        <dbReference type="EMBL" id="EAA07224.3"/>
    </source>
</evidence>
<evidence type="ECO:0000312" key="7">
    <source>
        <dbReference type="Proteomes" id="UP000007062"/>
    </source>
</evidence>
<dbReference type="EMBL" id="AAAB01008849">
    <property type="protein sequence ID" value="EAA07224.3"/>
    <property type="molecule type" value="Genomic_DNA"/>
</dbReference>
<dbReference type="STRING" id="7165.Q7QDY3"/>
<dbReference type="GlyCosmos" id="Q7QDY3">
    <property type="glycosylation" value="4 sites, No reported glycans"/>
</dbReference>
<dbReference type="PaxDb" id="7165-AGAP010479-PA"/>
<dbReference type="EnsemblMetazoa" id="AGAP010479-RA">
    <property type="protein sequence ID" value="AGAP010479-PA"/>
    <property type="gene ID" value="AGAP010479"/>
</dbReference>
<dbReference type="GeneID" id="1272604"/>
<dbReference type="KEGG" id="aga:1272604"/>
<dbReference type="VEuPathDB" id="VectorBase:AGAMI1_012045"/>
<dbReference type="VEuPathDB" id="VectorBase:AGAP010479"/>
<dbReference type="eggNOG" id="ENOG502T85J">
    <property type="taxonomic scope" value="Eukaryota"/>
</dbReference>
<dbReference type="InParanoid" id="Q7QDY3"/>
<dbReference type="OMA" id="AYPGFRN"/>
<dbReference type="Proteomes" id="UP000007062">
    <property type="component" value="Chromosome 3L"/>
</dbReference>
<dbReference type="GO" id="GO:0005886">
    <property type="term" value="C:plasma membrane"/>
    <property type="evidence" value="ECO:0007669"/>
    <property type="project" value="UniProtKB-SubCell"/>
</dbReference>
<sequence length="407" mass="45076">MALGNALYPLTATVFLCVVGFATSSNENSRFLINSRLEVNVKSLLGEICGTNSSLLSIGVKSLSNEYSDRTVENLCGNETTEVLLWIPVGNFGNLAELGLSSRYLGKGAGDEDFAEYCSYDVTTKSCTTDNGAVEGSILLLAEKFPERYELRDLVYKKWRNSTHLGAPILAYGTLKNREPAYKYVDQDISYLADTRIEYVLPATVTHGIPLSVYRGKTESYKLVAGETYYSRIFKTINAIRYMSPYSTINVTVIGSEGRDYREFRAKLVTVYTDEEGYGWSKSLSSIEAAMIETKLTETHVEYALPVNLYDTQPPVLSPLLPALNEGNSIVDKGQQPAKGIVAKPENIHIHISELDFGQAYPGFRNVAIGAAILFFSVLGVAIIDMIRRTIANRRAKRLHLGKYSRT</sequence>
<protein>
    <recommendedName>
        <fullName evidence="4">Enolase-binding protein</fullName>
        <shortName evidence="4">AgEBP</shortName>
    </recommendedName>
</protein>
<reference evidence="7" key="1">
    <citation type="journal article" date="2002" name="Science">
        <title>The genome sequence of the malaria mosquito Anopheles gambiae.</title>
        <authorList>
            <person name="Holt R.A."/>
            <person name="Subramanian G.M."/>
            <person name="Halpern A."/>
            <person name="Sutton G.G."/>
            <person name="Charlab R."/>
            <person name="Nusskern D.R."/>
            <person name="Wincker P."/>
            <person name="Clark A.G."/>
            <person name="Ribeiro J.M.C."/>
            <person name="Wides R."/>
            <person name="Salzberg S.L."/>
            <person name="Loftus B.J."/>
            <person name="Yandell M.D."/>
            <person name="Majoros W.H."/>
            <person name="Rusch D.B."/>
            <person name="Lai Z."/>
            <person name="Kraft C.L."/>
            <person name="Abril J.F."/>
            <person name="Anthouard V."/>
            <person name="Arensburger P."/>
            <person name="Atkinson P.W."/>
            <person name="Baden H."/>
            <person name="de Berardinis V."/>
            <person name="Baldwin D."/>
            <person name="Benes V."/>
            <person name="Biedler J."/>
            <person name="Blass C."/>
            <person name="Bolanos R."/>
            <person name="Boscus D."/>
            <person name="Barnstead M."/>
            <person name="Cai S."/>
            <person name="Center A."/>
            <person name="Chaturverdi K."/>
            <person name="Christophides G.K."/>
            <person name="Chrystal M.A.M."/>
            <person name="Clamp M."/>
            <person name="Cravchik A."/>
            <person name="Curwen V."/>
            <person name="Dana A."/>
            <person name="Delcher A."/>
            <person name="Dew I."/>
            <person name="Evans C.A."/>
            <person name="Flanigan M."/>
            <person name="Grundschober-Freimoser A."/>
            <person name="Friedli L."/>
            <person name="Gu Z."/>
            <person name="Guan P."/>
            <person name="Guigo R."/>
            <person name="Hillenmeyer M.E."/>
            <person name="Hladun S.L."/>
            <person name="Hogan J.R."/>
            <person name="Hong Y.S."/>
            <person name="Hoover J."/>
            <person name="Jaillon O."/>
            <person name="Ke Z."/>
            <person name="Kodira C.D."/>
            <person name="Kokoza E."/>
            <person name="Koutsos A."/>
            <person name="Letunic I."/>
            <person name="Levitsky A.A."/>
            <person name="Liang Y."/>
            <person name="Lin J.-J."/>
            <person name="Lobo N.F."/>
            <person name="Lopez J.R."/>
            <person name="Malek J.A."/>
            <person name="McIntosh T.C."/>
            <person name="Meister S."/>
            <person name="Miller J.R."/>
            <person name="Mobarry C."/>
            <person name="Mongin E."/>
            <person name="Murphy S.D."/>
            <person name="O'Brochta D.A."/>
            <person name="Pfannkoch C."/>
            <person name="Qi R."/>
            <person name="Regier M.A."/>
            <person name="Remington K."/>
            <person name="Shao H."/>
            <person name="Sharakhova M.V."/>
            <person name="Sitter C.D."/>
            <person name="Shetty J."/>
            <person name="Smith T.J."/>
            <person name="Strong R."/>
            <person name="Sun J."/>
            <person name="Thomasova D."/>
            <person name="Ton L.Q."/>
            <person name="Topalis P."/>
            <person name="Tu Z.J."/>
            <person name="Unger M.F."/>
            <person name="Walenz B."/>
            <person name="Wang A.H."/>
            <person name="Wang J."/>
            <person name="Wang M."/>
            <person name="Wang X."/>
            <person name="Woodford K.J."/>
            <person name="Wortman J.R."/>
            <person name="Wu M."/>
            <person name="Yao A."/>
            <person name="Zdobnov E.M."/>
            <person name="Zhang H."/>
            <person name="Zhao Q."/>
            <person name="Zhao S."/>
            <person name="Zhu S.C."/>
            <person name="Zhimulev I."/>
            <person name="Coluzzi M."/>
            <person name="della Torre A."/>
            <person name="Roth C.W."/>
            <person name="Louis C."/>
            <person name="Kalush F."/>
            <person name="Mural R.J."/>
            <person name="Myers E.W."/>
            <person name="Adams M.D."/>
            <person name="Smith H.O."/>
            <person name="Broder S."/>
            <person name="Gardner M.J."/>
            <person name="Fraser C.M."/>
            <person name="Birney E."/>
            <person name="Bork P."/>
            <person name="Brey P.T."/>
            <person name="Venter J.C."/>
            <person name="Weissenbach J."/>
            <person name="Kafatos F.C."/>
            <person name="Collins F.H."/>
            <person name="Hoffman S.L."/>
        </authorList>
    </citation>
    <scope>NUCLEOTIDE SEQUENCE [LARGE SCALE GENOMIC DNA]</scope>
    <source>
        <strain evidence="7">PEST</strain>
    </source>
</reference>
<reference evidence="5" key="2">
    <citation type="journal article" date="2014" name="Proc. Natl. Acad. Sci. U.S.A.">
        <title>Multiple pathways for Plasmodium ookinete invasion of the mosquito midgut.</title>
        <authorList>
            <person name="Vega-Rodriguez J."/>
            <person name="Ghosh A.K."/>
            <person name="Kanzok S.M."/>
            <person name="Dinglasan R.R."/>
            <person name="Wang S."/>
            <person name="Bongio N.J."/>
            <person name="Kalume D.E."/>
            <person name="Miura K."/>
            <person name="Long C.A."/>
            <person name="Pandey A."/>
            <person name="Jacobs-Lorena M."/>
        </authorList>
    </citation>
    <scope>FUNCTION (MICROBIAL INFECTION)</scope>
    <scope>INTERACTION WITH P.FALCIPARUM AND P.BERGHEI ENO</scope>
    <scope>SUBCELLULAR LOCATION</scope>
    <scope>TISSUE SPECIFICITY</scope>
    <scope>DISRUPTION PHENOTYPE</scope>
</reference>